<name>UGPC2_AGRFC</name>
<evidence type="ECO:0000255" key="1">
    <source>
        <dbReference type="HAMAP-Rule" id="MF_01727"/>
    </source>
</evidence>
<gene>
    <name evidence="1" type="primary">ugpC2</name>
    <name type="ordered locus">Atu3099</name>
    <name type="ORF">AGR_L_3418</name>
</gene>
<feature type="chain" id="PRO_0000289724" description="sn-glycerol-3-phosphate import ATP-binding protein UgpC 2">
    <location>
        <begin position="1"/>
        <end position="373"/>
    </location>
</feature>
<feature type="domain" description="ABC transporter" evidence="1">
    <location>
        <begin position="4"/>
        <end position="234"/>
    </location>
</feature>
<feature type="binding site" evidence="1">
    <location>
        <begin position="36"/>
        <end position="43"/>
    </location>
    <ligand>
        <name>ATP</name>
        <dbReference type="ChEBI" id="CHEBI:30616"/>
    </ligand>
</feature>
<keyword id="KW-0067">ATP-binding</keyword>
<keyword id="KW-0997">Cell inner membrane</keyword>
<keyword id="KW-1003">Cell membrane</keyword>
<keyword id="KW-0472">Membrane</keyword>
<keyword id="KW-0547">Nucleotide-binding</keyword>
<keyword id="KW-1185">Reference proteome</keyword>
<keyword id="KW-0762">Sugar transport</keyword>
<keyword id="KW-1278">Translocase</keyword>
<keyword id="KW-0813">Transport</keyword>
<dbReference type="EC" id="7.6.2.10" evidence="1"/>
<dbReference type="EMBL" id="AE007870">
    <property type="protein sequence ID" value="AAK90284.2"/>
    <property type="molecule type" value="Genomic_DNA"/>
</dbReference>
<dbReference type="PIR" id="AE2937">
    <property type="entry name" value="AE2937"/>
</dbReference>
<dbReference type="PIR" id="B98345">
    <property type="entry name" value="B98345"/>
</dbReference>
<dbReference type="RefSeq" id="NP_357499.2">
    <property type="nucleotide sequence ID" value="NC_003063.2"/>
</dbReference>
<dbReference type="RefSeq" id="WP_010972756.1">
    <property type="nucleotide sequence ID" value="NC_003063.2"/>
</dbReference>
<dbReference type="SMR" id="Q8UBB7"/>
<dbReference type="STRING" id="176299.Atu3099"/>
<dbReference type="EnsemblBacteria" id="AAK90284">
    <property type="protein sequence ID" value="AAK90284"/>
    <property type="gene ID" value="Atu3099"/>
</dbReference>
<dbReference type="GeneID" id="1134901"/>
<dbReference type="KEGG" id="atu:Atu3099"/>
<dbReference type="PATRIC" id="fig|176299.10.peg.2942"/>
<dbReference type="eggNOG" id="COG3842">
    <property type="taxonomic scope" value="Bacteria"/>
</dbReference>
<dbReference type="HOGENOM" id="CLU_000604_1_1_5"/>
<dbReference type="OrthoDB" id="8188565at2"/>
<dbReference type="PhylomeDB" id="Q8UBB7"/>
<dbReference type="BioCyc" id="AGRO:ATU3099-MONOMER"/>
<dbReference type="Proteomes" id="UP000000813">
    <property type="component" value="Chromosome linear"/>
</dbReference>
<dbReference type="GO" id="GO:0055052">
    <property type="term" value="C:ATP-binding cassette (ABC) transporter complex, substrate-binding subunit-containing"/>
    <property type="evidence" value="ECO:0007669"/>
    <property type="project" value="TreeGrafter"/>
</dbReference>
<dbReference type="GO" id="GO:0015430">
    <property type="term" value="F:ABC-type glycerol-3-phosphate transporter activity"/>
    <property type="evidence" value="ECO:0007669"/>
    <property type="project" value="UniProtKB-EC"/>
</dbReference>
<dbReference type="GO" id="GO:0005524">
    <property type="term" value="F:ATP binding"/>
    <property type="evidence" value="ECO:0007669"/>
    <property type="project" value="UniProtKB-KW"/>
</dbReference>
<dbReference type="GO" id="GO:0016887">
    <property type="term" value="F:ATP hydrolysis activity"/>
    <property type="evidence" value="ECO:0007669"/>
    <property type="project" value="InterPro"/>
</dbReference>
<dbReference type="GO" id="GO:0008643">
    <property type="term" value="P:carbohydrate transport"/>
    <property type="evidence" value="ECO:0007669"/>
    <property type="project" value="InterPro"/>
</dbReference>
<dbReference type="CDD" id="cd03301">
    <property type="entry name" value="ABC_MalK_N"/>
    <property type="match status" value="1"/>
</dbReference>
<dbReference type="FunFam" id="3.40.50.300:FF:000042">
    <property type="entry name" value="Maltose/maltodextrin ABC transporter, ATP-binding protein"/>
    <property type="match status" value="1"/>
</dbReference>
<dbReference type="Gene3D" id="2.40.50.100">
    <property type="match status" value="1"/>
</dbReference>
<dbReference type="Gene3D" id="2.40.50.140">
    <property type="entry name" value="Nucleic acid-binding proteins"/>
    <property type="match status" value="1"/>
</dbReference>
<dbReference type="Gene3D" id="3.40.50.300">
    <property type="entry name" value="P-loop containing nucleotide triphosphate hydrolases"/>
    <property type="match status" value="1"/>
</dbReference>
<dbReference type="InterPro" id="IPR003593">
    <property type="entry name" value="AAA+_ATPase"/>
</dbReference>
<dbReference type="InterPro" id="IPR003439">
    <property type="entry name" value="ABC_transporter-like_ATP-bd"/>
</dbReference>
<dbReference type="InterPro" id="IPR017871">
    <property type="entry name" value="ABC_transporter-like_CS"/>
</dbReference>
<dbReference type="InterPro" id="IPR015855">
    <property type="entry name" value="ABC_transpr_MalK-like"/>
</dbReference>
<dbReference type="InterPro" id="IPR047641">
    <property type="entry name" value="ABC_transpr_MalK/UgpC-like"/>
</dbReference>
<dbReference type="InterPro" id="IPR008995">
    <property type="entry name" value="Mo/tungstate-bd_C_term_dom"/>
</dbReference>
<dbReference type="InterPro" id="IPR012340">
    <property type="entry name" value="NA-bd_OB-fold"/>
</dbReference>
<dbReference type="InterPro" id="IPR040582">
    <property type="entry name" value="OB_MalK-like"/>
</dbReference>
<dbReference type="InterPro" id="IPR027417">
    <property type="entry name" value="P-loop_NTPase"/>
</dbReference>
<dbReference type="NCBIfam" id="NF008653">
    <property type="entry name" value="PRK11650.1"/>
    <property type="match status" value="1"/>
</dbReference>
<dbReference type="PANTHER" id="PTHR43875">
    <property type="entry name" value="MALTODEXTRIN IMPORT ATP-BINDING PROTEIN MSMX"/>
    <property type="match status" value="1"/>
</dbReference>
<dbReference type="PANTHER" id="PTHR43875:SF1">
    <property type="entry name" value="OSMOPROTECTIVE COMPOUNDS UPTAKE ATP-BINDING PROTEIN GGTA"/>
    <property type="match status" value="1"/>
</dbReference>
<dbReference type="Pfam" id="PF00005">
    <property type="entry name" value="ABC_tran"/>
    <property type="match status" value="1"/>
</dbReference>
<dbReference type="Pfam" id="PF17912">
    <property type="entry name" value="OB_MalK"/>
    <property type="match status" value="1"/>
</dbReference>
<dbReference type="SMART" id="SM00382">
    <property type="entry name" value="AAA"/>
    <property type="match status" value="1"/>
</dbReference>
<dbReference type="SUPFAM" id="SSF50331">
    <property type="entry name" value="MOP-like"/>
    <property type="match status" value="1"/>
</dbReference>
<dbReference type="SUPFAM" id="SSF52540">
    <property type="entry name" value="P-loop containing nucleoside triphosphate hydrolases"/>
    <property type="match status" value="1"/>
</dbReference>
<dbReference type="PROSITE" id="PS00211">
    <property type="entry name" value="ABC_TRANSPORTER_1"/>
    <property type="match status" value="1"/>
</dbReference>
<dbReference type="PROSITE" id="PS50893">
    <property type="entry name" value="ABC_TRANSPORTER_2"/>
    <property type="match status" value="1"/>
</dbReference>
<dbReference type="PROSITE" id="PS51315">
    <property type="entry name" value="UGPC"/>
    <property type="match status" value="1"/>
</dbReference>
<proteinExistence type="inferred from homology"/>
<accession>Q8UBB7</accession>
<accession>Q7CRL3</accession>
<sequence>MAQIDIRQVRKSYGKTPTLHGVDLSFDSGEFVVILGPSGCGKSTLLRMIAGLEEITSGEIAIGGRVVNTLEPRERGCAMVFQNYALYPHMSVAANIGYALKVAGVPKAERQRRIEETAKIVGLSDYLERKPAALSGGQRQRVAMARAIIREPAVFLFDEPLSNLDAKLRVSMRAEIRKLHQRLSATSIFVTHDQVEAMTLADRLVVMNKGNVEQVGHPLDIYHRPASTFVASFIGSPAMNLFTTKVEVETPAVILSGTPVKLFPETALELRGRNVTVGIRPEQCVVSMDGPGVPAIVDFVEELGSGRIVHADIAGETFSAAIGEDLLVKPGQRIHLDLPTAHLHFFDPATGKRIETEGTAETARSKNETLLAV</sequence>
<protein>
    <recommendedName>
        <fullName evidence="1">sn-glycerol-3-phosphate import ATP-binding protein UgpC 2</fullName>
        <ecNumber evidence="1">7.6.2.10</ecNumber>
    </recommendedName>
</protein>
<reference key="1">
    <citation type="journal article" date="2001" name="Science">
        <title>The genome of the natural genetic engineer Agrobacterium tumefaciens C58.</title>
        <authorList>
            <person name="Wood D.W."/>
            <person name="Setubal J.C."/>
            <person name="Kaul R."/>
            <person name="Monks D.E."/>
            <person name="Kitajima J.P."/>
            <person name="Okura V.K."/>
            <person name="Zhou Y."/>
            <person name="Chen L."/>
            <person name="Wood G.E."/>
            <person name="Almeida N.F. Jr."/>
            <person name="Woo L."/>
            <person name="Chen Y."/>
            <person name="Paulsen I.T."/>
            <person name="Eisen J.A."/>
            <person name="Karp P.D."/>
            <person name="Bovee D. Sr."/>
            <person name="Chapman P."/>
            <person name="Clendenning J."/>
            <person name="Deatherage G."/>
            <person name="Gillet W."/>
            <person name="Grant C."/>
            <person name="Kutyavin T."/>
            <person name="Levy R."/>
            <person name="Li M.-J."/>
            <person name="McClelland E."/>
            <person name="Palmieri A."/>
            <person name="Raymond C."/>
            <person name="Rouse G."/>
            <person name="Saenphimmachak C."/>
            <person name="Wu Z."/>
            <person name="Romero P."/>
            <person name="Gordon D."/>
            <person name="Zhang S."/>
            <person name="Yoo H."/>
            <person name="Tao Y."/>
            <person name="Biddle P."/>
            <person name="Jung M."/>
            <person name="Krespan W."/>
            <person name="Perry M."/>
            <person name="Gordon-Kamm B."/>
            <person name="Liao L."/>
            <person name="Kim S."/>
            <person name="Hendrick C."/>
            <person name="Zhao Z.-Y."/>
            <person name="Dolan M."/>
            <person name="Chumley F."/>
            <person name="Tingey S.V."/>
            <person name="Tomb J.-F."/>
            <person name="Gordon M.P."/>
            <person name="Olson M.V."/>
            <person name="Nester E.W."/>
        </authorList>
    </citation>
    <scope>NUCLEOTIDE SEQUENCE [LARGE SCALE GENOMIC DNA]</scope>
    <source>
        <strain>C58 / ATCC 33970</strain>
    </source>
</reference>
<reference key="2">
    <citation type="journal article" date="2001" name="Science">
        <title>Genome sequence of the plant pathogen and biotechnology agent Agrobacterium tumefaciens C58.</title>
        <authorList>
            <person name="Goodner B."/>
            <person name="Hinkle G."/>
            <person name="Gattung S."/>
            <person name="Miller N."/>
            <person name="Blanchard M."/>
            <person name="Qurollo B."/>
            <person name="Goldman B.S."/>
            <person name="Cao Y."/>
            <person name="Askenazi M."/>
            <person name="Halling C."/>
            <person name="Mullin L."/>
            <person name="Houmiel K."/>
            <person name="Gordon J."/>
            <person name="Vaudin M."/>
            <person name="Iartchouk O."/>
            <person name="Epp A."/>
            <person name="Liu F."/>
            <person name="Wollam C."/>
            <person name="Allinger M."/>
            <person name="Doughty D."/>
            <person name="Scott C."/>
            <person name="Lappas C."/>
            <person name="Markelz B."/>
            <person name="Flanagan C."/>
            <person name="Crowell C."/>
            <person name="Gurson J."/>
            <person name="Lomo C."/>
            <person name="Sear C."/>
            <person name="Strub G."/>
            <person name="Cielo C."/>
            <person name="Slater S."/>
        </authorList>
    </citation>
    <scope>NUCLEOTIDE SEQUENCE [LARGE SCALE GENOMIC DNA]</scope>
    <source>
        <strain>C58 / ATCC 33970</strain>
    </source>
</reference>
<comment type="function">
    <text evidence="1">Part of the ABC transporter complex UgpBAEC involved in sn-glycerol-3-phosphate (G3P) import. Responsible for energy coupling to the transport system.</text>
</comment>
<comment type="catalytic activity">
    <reaction evidence="1">
        <text>sn-glycerol 3-phosphate(out) + ATP + H2O = sn-glycerol 3-phosphate(in) + ADP + phosphate + H(+)</text>
        <dbReference type="Rhea" id="RHEA:21668"/>
        <dbReference type="ChEBI" id="CHEBI:15377"/>
        <dbReference type="ChEBI" id="CHEBI:15378"/>
        <dbReference type="ChEBI" id="CHEBI:30616"/>
        <dbReference type="ChEBI" id="CHEBI:43474"/>
        <dbReference type="ChEBI" id="CHEBI:57597"/>
        <dbReference type="ChEBI" id="CHEBI:456216"/>
        <dbReference type="EC" id="7.6.2.10"/>
    </reaction>
</comment>
<comment type="subunit">
    <text evidence="1">The complex is composed of two ATP-binding proteins (UgpC), two transmembrane proteins (UgpA and UgpE) and a solute-binding protein (UgpB).</text>
</comment>
<comment type="subcellular location">
    <subcellularLocation>
        <location evidence="1">Cell inner membrane</location>
        <topology evidence="1">Peripheral membrane protein</topology>
    </subcellularLocation>
</comment>
<comment type="similarity">
    <text evidence="1">Belongs to the ABC transporter superfamily. sn-glycerol-3-phosphate importer (TC 3.A.1.1.3) family.</text>
</comment>
<organism>
    <name type="scientific">Agrobacterium fabrum (strain C58 / ATCC 33970)</name>
    <name type="common">Agrobacterium tumefaciens (strain C58)</name>
    <dbReference type="NCBI Taxonomy" id="176299"/>
    <lineage>
        <taxon>Bacteria</taxon>
        <taxon>Pseudomonadati</taxon>
        <taxon>Pseudomonadota</taxon>
        <taxon>Alphaproteobacteria</taxon>
        <taxon>Hyphomicrobiales</taxon>
        <taxon>Rhizobiaceae</taxon>
        <taxon>Rhizobium/Agrobacterium group</taxon>
        <taxon>Agrobacterium</taxon>
        <taxon>Agrobacterium tumefaciens complex</taxon>
    </lineage>
</organism>